<dbReference type="EMBL" id="FM211187">
    <property type="protein sequence ID" value="CAR69294.1"/>
    <property type="molecule type" value="Genomic_DNA"/>
</dbReference>
<dbReference type="SMR" id="B8ZLE9"/>
<dbReference type="KEGG" id="sne:SPN23F15130"/>
<dbReference type="HOGENOM" id="CLU_061989_2_1_9"/>
<dbReference type="GO" id="GO:0005829">
    <property type="term" value="C:cytosol"/>
    <property type="evidence" value="ECO:0007669"/>
    <property type="project" value="TreeGrafter"/>
</dbReference>
<dbReference type="GO" id="GO:0033194">
    <property type="term" value="P:response to hydroperoxide"/>
    <property type="evidence" value="ECO:0007669"/>
    <property type="project" value="TreeGrafter"/>
</dbReference>
<dbReference type="HAMAP" id="MF_00652">
    <property type="entry name" value="UPF0246"/>
    <property type="match status" value="1"/>
</dbReference>
<dbReference type="InterPro" id="IPR005583">
    <property type="entry name" value="YaaA"/>
</dbReference>
<dbReference type="NCBIfam" id="NF002543">
    <property type="entry name" value="PRK02101.1-4"/>
    <property type="match status" value="1"/>
</dbReference>
<dbReference type="PANTHER" id="PTHR30283:SF4">
    <property type="entry name" value="PEROXIDE STRESS RESISTANCE PROTEIN YAAA"/>
    <property type="match status" value="1"/>
</dbReference>
<dbReference type="PANTHER" id="PTHR30283">
    <property type="entry name" value="PEROXIDE STRESS RESPONSE PROTEIN YAAA"/>
    <property type="match status" value="1"/>
</dbReference>
<dbReference type="Pfam" id="PF03883">
    <property type="entry name" value="H2O2_YaaD"/>
    <property type="match status" value="1"/>
</dbReference>
<comment type="similarity">
    <text evidence="1">Belongs to the UPF0246 family.</text>
</comment>
<evidence type="ECO:0000255" key="1">
    <source>
        <dbReference type="HAMAP-Rule" id="MF_00652"/>
    </source>
</evidence>
<feature type="chain" id="PRO_1000200428" description="UPF0246 protein SPN23F15130">
    <location>
        <begin position="1"/>
        <end position="242"/>
    </location>
</feature>
<name>Y1513_STRPJ</name>
<gene>
    <name type="ordered locus">SPN23F15130</name>
</gene>
<reference key="1">
    <citation type="journal article" date="2009" name="J. Bacteriol.">
        <title>Role of conjugative elements in the evolution of the multidrug-resistant pandemic clone Streptococcus pneumoniae Spain23F ST81.</title>
        <authorList>
            <person name="Croucher N.J."/>
            <person name="Walker D."/>
            <person name="Romero P."/>
            <person name="Lennard N."/>
            <person name="Paterson G.K."/>
            <person name="Bason N.C."/>
            <person name="Mitchell A.M."/>
            <person name="Quail M.A."/>
            <person name="Andrew P.W."/>
            <person name="Parkhill J."/>
            <person name="Bentley S.D."/>
            <person name="Mitchell T.J."/>
        </authorList>
    </citation>
    <scope>NUCLEOTIDE SEQUENCE [LARGE SCALE GENOMIC DNA]</scope>
    <source>
        <strain>ATCC 700669 / Spain 23F-1</strain>
    </source>
</reference>
<proteinExistence type="inferred from homology"/>
<protein>
    <recommendedName>
        <fullName evidence="1">UPF0246 protein SPN23F15130</fullName>
    </recommendedName>
</protein>
<organism>
    <name type="scientific">Streptococcus pneumoniae (strain ATCC 700669 / Spain 23F-1)</name>
    <dbReference type="NCBI Taxonomy" id="561276"/>
    <lineage>
        <taxon>Bacteria</taxon>
        <taxon>Bacillati</taxon>
        <taxon>Bacillota</taxon>
        <taxon>Bacilli</taxon>
        <taxon>Lactobacillales</taxon>
        <taxon>Streptococcaceae</taxon>
        <taxon>Streptococcus</taxon>
    </lineage>
</organism>
<accession>B8ZLE9</accession>
<sequence length="242" mass="27409">MKILIPTAKEMNTDLPSIETTLLRSESQAVLDALALYSASQLESFYKVSAEKAAEECQNIQALKRQTAQHYPALKLFDGLMYRHIKRDKLTEVEQAYLENHVFITSALYGVVPALSPMAPHRLDFLMKLKVAGKTLKSHWKAAYDEAVKQEEVIFSLLSSEFETVFSKEIRAKMVTFKFMEDRGGQLKIHSTISKKARGAFLTALIENQVQTVGEARRLNFAGFVYREDLSQPQGLVFVKEV</sequence>